<sequence length="413" mass="45671">MNTKINSKIRESLNKELKRQQSHIELIASENYVSQAVLELNGSVLTNKYAEGYPGKRYYGGCEFIDEIESLGIQTAKELFHAEHANIQPHSGSQANDAAYKALLEPKDRVVAMGLDAGGHLTHGYPINFSGYTYDFRFYGVNKDTEQLDYQEIEQIVLEHKPKLIVAGASAYSRIIDFKKFKEIADKVGAYLMVDMAHIAGLVAAGVHPNPMEYADIVTTTTHKTLRGARGGLILCKQEFAKKVDSAVFPGSQGGPLENLIAGKTQALLEASTDEFKEYGKQIVKNTKALANVLQENGLRLVAGGSDNHLINVDIKSTLQITGKKAEKILESIGIICNKNMIPFDTEKPFYTSGIRLGTPAMTTRGFKEEEFKQVGLIIVSALKDQSEENLEKLAKQVVSLCEKFPIYQSIKY</sequence>
<comment type="function">
    <text evidence="1">Catalyzes the reversible interconversion of serine and glycine with tetrahydrofolate (THF) serving as the one-carbon carrier. This reaction serves as the major source of one-carbon groups required for the biosynthesis of purines, thymidylate, methionine, and other important biomolecules. Also exhibits THF-independent aldolase activity toward beta-hydroxyamino acids, producing glycine and aldehydes, via a retro-aldol mechanism.</text>
</comment>
<comment type="catalytic activity">
    <reaction evidence="1">
        <text>(6R)-5,10-methylene-5,6,7,8-tetrahydrofolate + glycine + H2O = (6S)-5,6,7,8-tetrahydrofolate + L-serine</text>
        <dbReference type="Rhea" id="RHEA:15481"/>
        <dbReference type="ChEBI" id="CHEBI:15377"/>
        <dbReference type="ChEBI" id="CHEBI:15636"/>
        <dbReference type="ChEBI" id="CHEBI:33384"/>
        <dbReference type="ChEBI" id="CHEBI:57305"/>
        <dbReference type="ChEBI" id="CHEBI:57453"/>
        <dbReference type="EC" id="2.1.2.1"/>
    </reaction>
</comment>
<comment type="cofactor">
    <cofactor evidence="1">
        <name>pyridoxal 5'-phosphate</name>
        <dbReference type="ChEBI" id="CHEBI:597326"/>
    </cofactor>
</comment>
<comment type="pathway">
    <text evidence="1">One-carbon metabolism; tetrahydrofolate interconversion.</text>
</comment>
<comment type="pathway">
    <text evidence="1">Amino-acid biosynthesis; glycine biosynthesis; glycine from L-serine: step 1/1.</text>
</comment>
<comment type="subunit">
    <text evidence="1">Homodimer.</text>
</comment>
<comment type="subcellular location">
    <subcellularLocation>
        <location evidence="1">Cytoplasm</location>
    </subcellularLocation>
</comment>
<comment type="similarity">
    <text evidence="1">Belongs to the SHMT family.</text>
</comment>
<organism>
    <name type="scientific">Mycoplasma capricolum subsp. capricolum (strain California kid / ATCC 27343 / NCTC 10154)</name>
    <dbReference type="NCBI Taxonomy" id="340047"/>
    <lineage>
        <taxon>Bacteria</taxon>
        <taxon>Bacillati</taxon>
        <taxon>Mycoplasmatota</taxon>
        <taxon>Mollicutes</taxon>
        <taxon>Mycoplasmataceae</taxon>
        <taxon>Mycoplasma</taxon>
    </lineage>
</organism>
<name>GLYA_MYCCT</name>
<accession>Q2ST43</accession>
<gene>
    <name evidence="1" type="primary">glyA</name>
    <name type="ordered locus">MCAP_0075</name>
</gene>
<protein>
    <recommendedName>
        <fullName evidence="1">Serine hydroxymethyltransferase</fullName>
        <shortName evidence="1">SHMT</shortName>
        <shortName evidence="1">Serine methylase</shortName>
        <ecNumber evidence="1">2.1.2.1</ecNumber>
    </recommendedName>
</protein>
<dbReference type="EC" id="2.1.2.1" evidence="1"/>
<dbReference type="EMBL" id="CP000123">
    <property type="protein sequence ID" value="ABC01749.1"/>
    <property type="molecule type" value="Genomic_DNA"/>
</dbReference>
<dbReference type="RefSeq" id="WP_011386975.1">
    <property type="nucleotide sequence ID" value="NC_007633.1"/>
</dbReference>
<dbReference type="SMR" id="Q2ST43"/>
<dbReference type="GeneID" id="23778970"/>
<dbReference type="KEGG" id="mcp:MCAP_0075"/>
<dbReference type="HOGENOM" id="CLU_022477_2_1_14"/>
<dbReference type="PhylomeDB" id="Q2ST43"/>
<dbReference type="UniPathway" id="UPA00193"/>
<dbReference type="UniPathway" id="UPA00288">
    <property type="reaction ID" value="UER01023"/>
</dbReference>
<dbReference type="Proteomes" id="UP000001928">
    <property type="component" value="Chromosome"/>
</dbReference>
<dbReference type="GO" id="GO:0005829">
    <property type="term" value="C:cytosol"/>
    <property type="evidence" value="ECO:0007669"/>
    <property type="project" value="TreeGrafter"/>
</dbReference>
<dbReference type="GO" id="GO:0004372">
    <property type="term" value="F:glycine hydroxymethyltransferase activity"/>
    <property type="evidence" value="ECO:0007669"/>
    <property type="project" value="UniProtKB-UniRule"/>
</dbReference>
<dbReference type="GO" id="GO:0030170">
    <property type="term" value="F:pyridoxal phosphate binding"/>
    <property type="evidence" value="ECO:0007669"/>
    <property type="project" value="UniProtKB-UniRule"/>
</dbReference>
<dbReference type="GO" id="GO:0019264">
    <property type="term" value="P:glycine biosynthetic process from serine"/>
    <property type="evidence" value="ECO:0007669"/>
    <property type="project" value="UniProtKB-UniRule"/>
</dbReference>
<dbReference type="GO" id="GO:0035999">
    <property type="term" value="P:tetrahydrofolate interconversion"/>
    <property type="evidence" value="ECO:0007669"/>
    <property type="project" value="UniProtKB-UniRule"/>
</dbReference>
<dbReference type="CDD" id="cd00378">
    <property type="entry name" value="SHMT"/>
    <property type="match status" value="1"/>
</dbReference>
<dbReference type="FunFam" id="3.40.640.10:FF:000001">
    <property type="entry name" value="Serine hydroxymethyltransferase"/>
    <property type="match status" value="1"/>
</dbReference>
<dbReference type="Gene3D" id="3.90.1150.10">
    <property type="entry name" value="Aspartate Aminotransferase, domain 1"/>
    <property type="match status" value="1"/>
</dbReference>
<dbReference type="Gene3D" id="3.40.640.10">
    <property type="entry name" value="Type I PLP-dependent aspartate aminotransferase-like (Major domain)"/>
    <property type="match status" value="1"/>
</dbReference>
<dbReference type="HAMAP" id="MF_00051">
    <property type="entry name" value="SHMT"/>
    <property type="match status" value="1"/>
</dbReference>
<dbReference type="InterPro" id="IPR015424">
    <property type="entry name" value="PyrdxlP-dep_Trfase"/>
</dbReference>
<dbReference type="InterPro" id="IPR015421">
    <property type="entry name" value="PyrdxlP-dep_Trfase_major"/>
</dbReference>
<dbReference type="InterPro" id="IPR015422">
    <property type="entry name" value="PyrdxlP-dep_Trfase_small"/>
</dbReference>
<dbReference type="InterPro" id="IPR001085">
    <property type="entry name" value="Ser_HO-MeTrfase"/>
</dbReference>
<dbReference type="InterPro" id="IPR049943">
    <property type="entry name" value="Ser_HO-MeTrfase-like"/>
</dbReference>
<dbReference type="InterPro" id="IPR019798">
    <property type="entry name" value="Ser_HO-MeTrfase_PLP_BS"/>
</dbReference>
<dbReference type="InterPro" id="IPR039429">
    <property type="entry name" value="SHMT-like_dom"/>
</dbReference>
<dbReference type="NCBIfam" id="NF000586">
    <property type="entry name" value="PRK00011.1"/>
    <property type="match status" value="1"/>
</dbReference>
<dbReference type="PANTHER" id="PTHR11680">
    <property type="entry name" value="SERINE HYDROXYMETHYLTRANSFERASE"/>
    <property type="match status" value="1"/>
</dbReference>
<dbReference type="PANTHER" id="PTHR11680:SF35">
    <property type="entry name" value="SERINE HYDROXYMETHYLTRANSFERASE 1"/>
    <property type="match status" value="1"/>
</dbReference>
<dbReference type="Pfam" id="PF00464">
    <property type="entry name" value="SHMT"/>
    <property type="match status" value="1"/>
</dbReference>
<dbReference type="PIRSF" id="PIRSF000412">
    <property type="entry name" value="SHMT"/>
    <property type="match status" value="1"/>
</dbReference>
<dbReference type="SUPFAM" id="SSF53383">
    <property type="entry name" value="PLP-dependent transferases"/>
    <property type="match status" value="1"/>
</dbReference>
<dbReference type="PROSITE" id="PS00096">
    <property type="entry name" value="SHMT"/>
    <property type="match status" value="1"/>
</dbReference>
<reference key="1">
    <citation type="submission" date="2005-09" db="EMBL/GenBank/DDBJ databases">
        <authorList>
            <person name="Glass J.I."/>
            <person name="Lartigue C."/>
            <person name="Pfannkoch C."/>
            <person name="Baden-Tillson H."/>
            <person name="Smith H.O."/>
            <person name="Venter J.C."/>
            <person name="Roske K."/>
            <person name="Wise K.S."/>
            <person name="Calcutt M.J."/>
            <person name="Nelson W.C."/>
            <person name="Nierman W.C."/>
        </authorList>
    </citation>
    <scope>NUCLEOTIDE SEQUENCE [LARGE SCALE GENOMIC DNA]</scope>
    <source>
        <strain>California kid / ATCC 27343 / NCTC 10154</strain>
    </source>
</reference>
<keyword id="KW-0028">Amino-acid biosynthesis</keyword>
<keyword id="KW-0963">Cytoplasm</keyword>
<keyword id="KW-0554">One-carbon metabolism</keyword>
<keyword id="KW-0663">Pyridoxal phosphate</keyword>
<keyword id="KW-0808">Transferase</keyword>
<evidence type="ECO:0000255" key="1">
    <source>
        <dbReference type="HAMAP-Rule" id="MF_00051"/>
    </source>
</evidence>
<feature type="chain" id="PRO_0000234987" description="Serine hydroxymethyltransferase">
    <location>
        <begin position="1"/>
        <end position="413"/>
    </location>
</feature>
<feature type="binding site" evidence="1">
    <location>
        <position position="115"/>
    </location>
    <ligand>
        <name>(6S)-5,6,7,8-tetrahydrofolate</name>
        <dbReference type="ChEBI" id="CHEBI:57453"/>
    </ligand>
</feature>
<feature type="binding site" evidence="1">
    <location>
        <begin position="119"/>
        <end position="121"/>
    </location>
    <ligand>
        <name>(6S)-5,6,7,8-tetrahydrofolate</name>
        <dbReference type="ChEBI" id="CHEBI:57453"/>
    </ligand>
</feature>
<feature type="site" description="Plays an important role in substrate specificity" evidence="1">
    <location>
        <position position="223"/>
    </location>
</feature>
<feature type="modified residue" description="N6-(pyridoxal phosphate)lysine" evidence="1">
    <location>
        <position position="224"/>
    </location>
</feature>
<proteinExistence type="inferred from homology"/>